<keyword id="KW-0131">Cell cycle</keyword>
<keyword id="KW-0132">Cell division</keyword>
<keyword id="KW-0963">Cytoplasm</keyword>
<keyword id="KW-1185">Reference proteome</keyword>
<keyword id="KW-0717">Septation</keyword>
<accession>Q32JZ0</accession>
<reference key="1">
    <citation type="journal article" date="2005" name="Nucleic Acids Res.">
        <title>Genome dynamics and diversity of Shigella species, the etiologic agents of bacillary dysentery.</title>
        <authorList>
            <person name="Yang F."/>
            <person name="Yang J."/>
            <person name="Zhang X."/>
            <person name="Chen L."/>
            <person name="Jiang Y."/>
            <person name="Yan Y."/>
            <person name="Tang X."/>
            <person name="Wang J."/>
            <person name="Xiong Z."/>
            <person name="Dong J."/>
            <person name="Xue Y."/>
            <person name="Zhu Y."/>
            <person name="Xu X."/>
            <person name="Sun L."/>
            <person name="Chen S."/>
            <person name="Nie H."/>
            <person name="Peng J."/>
            <person name="Xu J."/>
            <person name="Wang Y."/>
            <person name="Yuan Z."/>
            <person name="Wen Y."/>
            <person name="Yao Z."/>
            <person name="Shen Y."/>
            <person name="Qiang B."/>
            <person name="Hou Y."/>
            <person name="Yu J."/>
            <person name="Jin Q."/>
        </authorList>
    </citation>
    <scope>NUCLEOTIDE SEQUENCE [LARGE SCALE GENOMIC DNA]</scope>
    <source>
        <strain>Sd197</strain>
    </source>
</reference>
<protein>
    <recommendedName>
        <fullName evidence="1">Cell division protein ZapD</fullName>
    </recommendedName>
    <alternativeName>
        <fullName evidence="1">Z ring-associated protein D</fullName>
    </alternativeName>
</protein>
<comment type="function">
    <text evidence="1">Cell division factor that enhances FtsZ-ring assembly. Directly interacts with FtsZ and promotes bundling of FtsZ protofilaments, with a reduction in FtsZ GTPase activity.</text>
</comment>
<comment type="subunit">
    <text evidence="1">Interacts with FtsZ.</text>
</comment>
<comment type="subcellular location">
    <subcellularLocation>
        <location evidence="1">Cytoplasm</location>
    </subcellularLocation>
    <text evidence="1">Localizes to mid-cell in an FtsZ-dependent manner.</text>
</comment>
<comment type="similarity">
    <text evidence="1">Belongs to the ZapD family.</text>
</comment>
<dbReference type="EMBL" id="CP000034">
    <property type="protein sequence ID" value="ABB60367.1"/>
    <property type="molecule type" value="Genomic_DNA"/>
</dbReference>
<dbReference type="RefSeq" id="WP_001194722.1">
    <property type="nucleotide sequence ID" value="NC_007606.1"/>
</dbReference>
<dbReference type="RefSeq" id="YP_401856.1">
    <property type="nucleotide sequence ID" value="NC_007606.1"/>
</dbReference>
<dbReference type="SMR" id="Q32JZ0"/>
<dbReference type="STRING" id="300267.SDY_0132"/>
<dbReference type="EnsemblBacteria" id="ABB60367">
    <property type="protein sequence ID" value="ABB60367"/>
    <property type="gene ID" value="SDY_0132"/>
</dbReference>
<dbReference type="KEGG" id="sdy:SDY_0132"/>
<dbReference type="PATRIC" id="fig|300267.13.peg.150"/>
<dbReference type="HOGENOM" id="CLU_076303_0_0_6"/>
<dbReference type="Proteomes" id="UP000002716">
    <property type="component" value="Chromosome"/>
</dbReference>
<dbReference type="GO" id="GO:0032153">
    <property type="term" value="C:cell division site"/>
    <property type="evidence" value="ECO:0007669"/>
    <property type="project" value="TreeGrafter"/>
</dbReference>
<dbReference type="GO" id="GO:0005737">
    <property type="term" value="C:cytoplasm"/>
    <property type="evidence" value="ECO:0007669"/>
    <property type="project" value="UniProtKB-SubCell"/>
</dbReference>
<dbReference type="GO" id="GO:0000917">
    <property type="term" value="P:division septum assembly"/>
    <property type="evidence" value="ECO:0007669"/>
    <property type="project" value="UniProtKB-KW"/>
</dbReference>
<dbReference type="GO" id="GO:0043093">
    <property type="term" value="P:FtsZ-dependent cytokinesis"/>
    <property type="evidence" value="ECO:0007669"/>
    <property type="project" value="UniProtKB-UniRule"/>
</dbReference>
<dbReference type="FunFam" id="1.10.3900.10:FF:000001">
    <property type="entry name" value="Cell division protein ZapD"/>
    <property type="match status" value="1"/>
</dbReference>
<dbReference type="FunFam" id="2.60.440.10:FF:000001">
    <property type="entry name" value="Cell division protein ZapD"/>
    <property type="match status" value="1"/>
</dbReference>
<dbReference type="Gene3D" id="1.10.3900.10">
    <property type="entry name" value="YacF-like"/>
    <property type="match status" value="1"/>
</dbReference>
<dbReference type="Gene3D" id="2.60.440.10">
    <property type="entry name" value="YacF-like domains"/>
    <property type="match status" value="1"/>
</dbReference>
<dbReference type="HAMAP" id="MF_01092">
    <property type="entry name" value="ZapD"/>
    <property type="match status" value="1"/>
</dbReference>
<dbReference type="InterPro" id="IPR009777">
    <property type="entry name" value="ZapD"/>
</dbReference>
<dbReference type="InterPro" id="IPR027462">
    <property type="entry name" value="ZapD_C"/>
</dbReference>
<dbReference type="InterPro" id="IPR036268">
    <property type="entry name" value="ZapD_sf"/>
</dbReference>
<dbReference type="NCBIfam" id="NF003653">
    <property type="entry name" value="PRK05287.1-1"/>
    <property type="match status" value="1"/>
</dbReference>
<dbReference type="NCBIfam" id="NF003655">
    <property type="entry name" value="PRK05287.1-3"/>
    <property type="match status" value="1"/>
</dbReference>
<dbReference type="PANTHER" id="PTHR39455">
    <property type="entry name" value="CELL DIVISION PROTEIN ZAPD"/>
    <property type="match status" value="1"/>
</dbReference>
<dbReference type="PANTHER" id="PTHR39455:SF1">
    <property type="entry name" value="CELL DIVISION PROTEIN ZAPD"/>
    <property type="match status" value="1"/>
</dbReference>
<dbReference type="Pfam" id="PF07072">
    <property type="entry name" value="ZapD"/>
    <property type="match status" value="1"/>
</dbReference>
<dbReference type="SUPFAM" id="SSF160950">
    <property type="entry name" value="YacF-like"/>
    <property type="match status" value="1"/>
</dbReference>
<evidence type="ECO:0000255" key="1">
    <source>
        <dbReference type="HAMAP-Rule" id="MF_01092"/>
    </source>
</evidence>
<proteinExistence type="inferred from homology"/>
<feature type="chain" id="PRO_1000064925" description="Cell division protein ZapD">
    <location>
        <begin position="1"/>
        <end position="247"/>
    </location>
</feature>
<name>ZAPD_SHIDS</name>
<gene>
    <name evidence="1" type="primary">zapD</name>
    <name type="ordered locus">SDY_0132</name>
</gene>
<organism>
    <name type="scientific">Shigella dysenteriae serotype 1 (strain Sd197)</name>
    <dbReference type="NCBI Taxonomy" id="300267"/>
    <lineage>
        <taxon>Bacteria</taxon>
        <taxon>Pseudomonadati</taxon>
        <taxon>Pseudomonadota</taxon>
        <taxon>Gammaproteobacteria</taxon>
        <taxon>Enterobacterales</taxon>
        <taxon>Enterobacteriaceae</taxon>
        <taxon>Shigella</taxon>
    </lineage>
</organism>
<sequence>MQTQVLFEHPLNEKMRTWLRIEFLIQQLTVNLPIADHAGALHFFRNVSELLDVFERGEVRTELLKELDRQQRKLQTWIGVPGVDQSRIEALIQQLKAAGSVLISAPRIGQFLREDRLIALVRQRLSIPGGCCSFDLPTLHIWLHLPQAQRDSQVETWIASLNPLTQALTMVLDLIRQSAPFRKQTSLNGFYQDNGGDADLLRLNLSLDSQLYPQISGHKSRFAIRFMPLDTENGQVPERLDFELACC</sequence>